<keyword id="KW-0067">ATP-binding</keyword>
<keyword id="KW-0963">Cytoplasm</keyword>
<keyword id="KW-0436">Ligase</keyword>
<keyword id="KW-0547">Nucleotide-binding</keyword>
<keyword id="KW-0819">tRNA processing</keyword>
<protein>
    <recommendedName>
        <fullName evidence="1">tRNA(Ile)-lysidine synthase</fullName>
        <ecNumber evidence="1">6.3.4.19</ecNumber>
    </recommendedName>
    <alternativeName>
        <fullName evidence="1">tRNA(Ile)-2-lysyl-cytidine synthase</fullName>
    </alternativeName>
    <alternativeName>
        <fullName evidence="1">tRNA(Ile)-lysidine synthetase</fullName>
    </alternativeName>
</protein>
<sequence length="430" mass="48371">MTTLTLNTSLLSSCRILAAFSGGLDSTVLLHQLVLWRERHPDVTLRAIHIHHGLSPHADSWVRHCETVCERWQVPLVVERVTLADNGLGIEAHAREARYRAFAQTLLPGEVLATAQHLDDQCETFLLALKRGSGPAGLSAMGERSPFAGTLLLRPLLRETRKTLEQWAVRHGLCWIEDESNQDDAYDRNFLRLRALPLLQQRWPHFPAAVARSATLCAEQERLLDELLASDLTDCITAEGTLRLSPLMSMSDVRRAAILRRWLAMRNAPMPSRDALERIWQEVALARDDASPCLRFGDREIRRYQSQLWWIKSVAGQHETTVAWPVWQTPLALPAGLGTVQLVPGGELRRPREEESVSIRFKAPGVLHIVGRNGGRKLKKIWQEQGIPPWRRDTTPLLFYGETLIAAAGVFVTREGAAEDKEGVSLVWHA</sequence>
<name>TILS_SALNS</name>
<organism>
    <name type="scientific">Salmonella newport (strain SL254)</name>
    <dbReference type="NCBI Taxonomy" id="423368"/>
    <lineage>
        <taxon>Bacteria</taxon>
        <taxon>Pseudomonadati</taxon>
        <taxon>Pseudomonadota</taxon>
        <taxon>Gammaproteobacteria</taxon>
        <taxon>Enterobacterales</taxon>
        <taxon>Enterobacteriaceae</taxon>
        <taxon>Salmonella</taxon>
    </lineage>
</organism>
<dbReference type="EC" id="6.3.4.19" evidence="1"/>
<dbReference type="EMBL" id="CP001113">
    <property type="protein sequence ID" value="ACF62516.1"/>
    <property type="molecule type" value="Genomic_DNA"/>
</dbReference>
<dbReference type="RefSeq" id="WP_000210038.1">
    <property type="nucleotide sequence ID" value="NZ_CCMR01000003.1"/>
</dbReference>
<dbReference type="SMR" id="B4SV18"/>
<dbReference type="KEGG" id="see:SNSL254_A0258"/>
<dbReference type="HOGENOM" id="CLU_018869_2_0_6"/>
<dbReference type="Proteomes" id="UP000008824">
    <property type="component" value="Chromosome"/>
</dbReference>
<dbReference type="GO" id="GO:0005737">
    <property type="term" value="C:cytoplasm"/>
    <property type="evidence" value="ECO:0007669"/>
    <property type="project" value="UniProtKB-SubCell"/>
</dbReference>
<dbReference type="GO" id="GO:0005524">
    <property type="term" value="F:ATP binding"/>
    <property type="evidence" value="ECO:0007669"/>
    <property type="project" value="UniProtKB-UniRule"/>
</dbReference>
<dbReference type="GO" id="GO:0032267">
    <property type="term" value="F:tRNA(Ile)-lysidine synthase activity"/>
    <property type="evidence" value="ECO:0007669"/>
    <property type="project" value="UniProtKB-EC"/>
</dbReference>
<dbReference type="GO" id="GO:0006400">
    <property type="term" value="P:tRNA modification"/>
    <property type="evidence" value="ECO:0007669"/>
    <property type="project" value="UniProtKB-UniRule"/>
</dbReference>
<dbReference type="CDD" id="cd01992">
    <property type="entry name" value="TilS_N"/>
    <property type="match status" value="1"/>
</dbReference>
<dbReference type="FunFam" id="3.40.50.620:FF:000173">
    <property type="entry name" value="tRNA(Ile)-lysidine synthase"/>
    <property type="match status" value="1"/>
</dbReference>
<dbReference type="Gene3D" id="1.20.59.20">
    <property type="match status" value="1"/>
</dbReference>
<dbReference type="Gene3D" id="3.40.50.620">
    <property type="entry name" value="HUPs"/>
    <property type="match status" value="1"/>
</dbReference>
<dbReference type="HAMAP" id="MF_01161">
    <property type="entry name" value="tRNA_Ile_lys_synt"/>
    <property type="match status" value="1"/>
</dbReference>
<dbReference type="InterPro" id="IPR012796">
    <property type="entry name" value="Lysidine-tRNA-synth_C"/>
</dbReference>
<dbReference type="InterPro" id="IPR014729">
    <property type="entry name" value="Rossmann-like_a/b/a_fold"/>
</dbReference>
<dbReference type="InterPro" id="IPR011063">
    <property type="entry name" value="TilS/TtcA_N"/>
</dbReference>
<dbReference type="InterPro" id="IPR012094">
    <property type="entry name" value="tRNA_Ile_lys_synt"/>
</dbReference>
<dbReference type="InterPro" id="IPR012795">
    <property type="entry name" value="tRNA_Ile_lys_synt_N"/>
</dbReference>
<dbReference type="InterPro" id="IPR015262">
    <property type="entry name" value="tRNA_Ile_lys_synt_subst-bd"/>
</dbReference>
<dbReference type="NCBIfam" id="TIGR02433">
    <property type="entry name" value="lysidine_TilS_C"/>
    <property type="match status" value="1"/>
</dbReference>
<dbReference type="NCBIfam" id="TIGR02432">
    <property type="entry name" value="lysidine_TilS_N"/>
    <property type="match status" value="1"/>
</dbReference>
<dbReference type="NCBIfam" id="NF007942">
    <property type="entry name" value="PRK10660.1"/>
    <property type="match status" value="1"/>
</dbReference>
<dbReference type="PANTHER" id="PTHR43033">
    <property type="entry name" value="TRNA(ILE)-LYSIDINE SYNTHASE-RELATED"/>
    <property type="match status" value="1"/>
</dbReference>
<dbReference type="PANTHER" id="PTHR43033:SF1">
    <property type="entry name" value="TRNA(ILE)-LYSIDINE SYNTHASE-RELATED"/>
    <property type="match status" value="1"/>
</dbReference>
<dbReference type="Pfam" id="PF01171">
    <property type="entry name" value="ATP_bind_3"/>
    <property type="match status" value="1"/>
</dbReference>
<dbReference type="Pfam" id="PF09179">
    <property type="entry name" value="TilS"/>
    <property type="match status" value="1"/>
</dbReference>
<dbReference type="Pfam" id="PF11734">
    <property type="entry name" value="TilS_C"/>
    <property type="match status" value="1"/>
</dbReference>
<dbReference type="SMART" id="SM00977">
    <property type="entry name" value="TilS_C"/>
    <property type="match status" value="1"/>
</dbReference>
<dbReference type="SUPFAM" id="SSF52402">
    <property type="entry name" value="Adenine nucleotide alpha hydrolases-like"/>
    <property type="match status" value="1"/>
</dbReference>
<dbReference type="SUPFAM" id="SSF82829">
    <property type="entry name" value="MesJ substrate recognition domain-like"/>
    <property type="match status" value="1"/>
</dbReference>
<dbReference type="SUPFAM" id="SSF56037">
    <property type="entry name" value="PheT/TilS domain"/>
    <property type="match status" value="1"/>
</dbReference>
<gene>
    <name evidence="1" type="primary">tilS</name>
    <name type="ordered locus">SNSL254_A0258</name>
</gene>
<comment type="function">
    <text evidence="1">Ligates lysine onto the cytidine present at position 34 of the AUA codon-specific tRNA(Ile) that contains the anticodon CAU, in an ATP-dependent manner. Cytidine is converted to lysidine, thus changing the amino acid specificity of the tRNA from methionine to isoleucine.</text>
</comment>
<comment type="catalytic activity">
    <reaction evidence="1">
        <text>cytidine(34) in tRNA(Ile2) + L-lysine + ATP = lysidine(34) in tRNA(Ile2) + AMP + diphosphate + H(+)</text>
        <dbReference type="Rhea" id="RHEA:43744"/>
        <dbReference type="Rhea" id="RHEA-COMP:10625"/>
        <dbReference type="Rhea" id="RHEA-COMP:10670"/>
        <dbReference type="ChEBI" id="CHEBI:15378"/>
        <dbReference type="ChEBI" id="CHEBI:30616"/>
        <dbReference type="ChEBI" id="CHEBI:32551"/>
        <dbReference type="ChEBI" id="CHEBI:33019"/>
        <dbReference type="ChEBI" id="CHEBI:82748"/>
        <dbReference type="ChEBI" id="CHEBI:83665"/>
        <dbReference type="ChEBI" id="CHEBI:456215"/>
        <dbReference type="EC" id="6.3.4.19"/>
    </reaction>
</comment>
<comment type="subcellular location">
    <subcellularLocation>
        <location evidence="1">Cytoplasm</location>
    </subcellularLocation>
</comment>
<comment type="domain">
    <text>The N-terminal region contains the highly conserved SGGXDS motif, predicted to be a P-loop motif involved in ATP binding.</text>
</comment>
<comment type="similarity">
    <text evidence="1">Belongs to the tRNA(Ile)-lysidine synthase family.</text>
</comment>
<accession>B4SV18</accession>
<proteinExistence type="inferred from homology"/>
<reference key="1">
    <citation type="journal article" date="2011" name="J. Bacteriol.">
        <title>Comparative genomics of 28 Salmonella enterica isolates: evidence for CRISPR-mediated adaptive sublineage evolution.</title>
        <authorList>
            <person name="Fricke W.F."/>
            <person name="Mammel M.K."/>
            <person name="McDermott P.F."/>
            <person name="Tartera C."/>
            <person name="White D.G."/>
            <person name="Leclerc J.E."/>
            <person name="Ravel J."/>
            <person name="Cebula T.A."/>
        </authorList>
    </citation>
    <scope>NUCLEOTIDE SEQUENCE [LARGE SCALE GENOMIC DNA]</scope>
    <source>
        <strain>SL254</strain>
    </source>
</reference>
<feature type="chain" id="PRO_1000164330" description="tRNA(Ile)-lysidine synthase">
    <location>
        <begin position="1"/>
        <end position="430"/>
    </location>
</feature>
<feature type="binding site" evidence="1">
    <location>
        <begin position="21"/>
        <end position="26"/>
    </location>
    <ligand>
        <name>ATP</name>
        <dbReference type="ChEBI" id="CHEBI:30616"/>
    </ligand>
</feature>
<evidence type="ECO:0000255" key="1">
    <source>
        <dbReference type="HAMAP-Rule" id="MF_01161"/>
    </source>
</evidence>